<organism>
    <name type="scientific">Salmonella paratyphi C (strain RKS4594)</name>
    <dbReference type="NCBI Taxonomy" id="476213"/>
    <lineage>
        <taxon>Bacteria</taxon>
        <taxon>Pseudomonadati</taxon>
        <taxon>Pseudomonadota</taxon>
        <taxon>Gammaproteobacteria</taxon>
        <taxon>Enterobacterales</taxon>
        <taxon>Enterobacteriaceae</taxon>
        <taxon>Salmonella</taxon>
    </lineage>
</organism>
<name>DCYD_SALPC</name>
<evidence type="ECO:0000255" key="1">
    <source>
        <dbReference type="HAMAP-Rule" id="MF_01045"/>
    </source>
</evidence>
<feature type="chain" id="PRO_1000149602" description="D-cysteine desulfhydrase">
    <location>
        <begin position="1"/>
        <end position="328"/>
    </location>
</feature>
<feature type="modified residue" description="N6-(pyridoxal phosphate)lysine" evidence="1">
    <location>
        <position position="51"/>
    </location>
</feature>
<dbReference type="EC" id="4.4.1.15" evidence="1"/>
<dbReference type="EMBL" id="CP000857">
    <property type="protein sequence ID" value="ACN45903.1"/>
    <property type="molecule type" value="Genomic_DNA"/>
</dbReference>
<dbReference type="RefSeq" id="WP_001128193.1">
    <property type="nucleotide sequence ID" value="NC_012125.1"/>
</dbReference>
<dbReference type="SMR" id="C0Q2A0"/>
<dbReference type="KEGG" id="sei:SPC_1761"/>
<dbReference type="HOGENOM" id="CLU_048897_1_0_6"/>
<dbReference type="Proteomes" id="UP000001599">
    <property type="component" value="Chromosome"/>
</dbReference>
<dbReference type="GO" id="GO:0019148">
    <property type="term" value="F:D-cysteine desulfhydrase activity"/>
    <property type="evidence" value="ECO:0007669"/>
    <property type="project" value="UniProtKB-UniRule"/>
</dbReference>
<dbReference type="GO" id="GO:0046416">
    <property type="term" value="P:D-amino acid metabolic process"/>
    <property type="evidence" value="ECO:0007669"/>
    <property type="project" value="UniProtKB-UniRule"/>
</dbReference>
<dbReference type="CDD" id="cd06449">
    <property type="entry name" value="ACCD"/>
    <property type="match status" value="1"/>
</dbReference>
<dbReference type="FunFam" id="3.40.50.1100:FF:000019">
    <property type="entry name" value="D-cysteine desulfhydrase"/>
    <property type="match status" value="1"/>
</dbReference>
<dbReference type="Gene3D" id="3.40.50.1100">
    <property type="match status" value="2"/>
</dbReference>
<dbReference type="HAMAP" id="MF_01045">
    <property type="entry name" value="D_Cys_desulfhydr"/>
    <property type="match status" value="1"/>
</dbReference>
<dbReference type="InterPro" id="IPR027278">
    <property type="entry name" value="ACCD_DCysDesulf"/>
</dbReference>
<dbReference type="InterPro" id="IPR005966">
    <property type="entry name" value="D-Cys_desShydrase"/>
</dbReference>
<dbReference type="InterPro" id="IPR023702">
    <property type="entry name" value="D_Cys_desulphydr_bac"/>
</dbReference>
<dbReference type="InterPro" id="IPR001926">
    <property type="entry name" value="TrpB-like_PALP"/>
</dbReference>
<dbReference type="InterPro" id="IPR036052">
    <property type="entry name" value="TrpB-like_PALP_sf"/>
</dbReference>
<dbReference type="NCBIfam" id="TIGR01275">
    <property type="entry name" value="ACC_deam_rel"/>
    <property type="match status" value="1"/>
</dbReference>
<dbReference type="NCBIfam" id="NF003029">
    <property type="entry name" value="PRK03910.1-1"/>
    <property type="match status" value="1"/>
</dbReference>
<dbReference type="NCBIfam" id="NF003030">
    <property type="entry name" value="PRK03910.1-3"/>
    <property type="match status" value="1"/>
</dbReference>
<dbReference type="NCBIfam" id="NF003032">
    <property type="entry name" value="PRK03910.1-5"/>
    <property type="match status" value="1"/>
</dbReference>
<dbReference type="PANTHER" id="PTHR43780">
    <property type="entry name" value="1-AMINOCYCLOPROPANE-1-CARBOXYLATE DEAMINASE-RELATED"/>
    <property type="match status" value="1"/>
</dbReference>
<dbReference type="PANTHER" id="PTHR43780:SF2">
    <property type="entry name" value="1-AMINOCYCLOPROPANE-1-CARBOXYLATE DEAMINASE-RELATED"/>
    <property type="match status" value="1"/>
</dbReference>
<dbReference type="Pfam" id="PF00291">
    <property type="entry name" value="PALP"/>
    <property type="match status" value="1"/>
</dbReference>
<dbReference type="PIRSF" id="PIRSF006278">
    <property type="entry name" value="ACCD_DCysDesulf"/>
    <property type="match status" value="1"/>
</dbReference>
<dbReference type="SUPFAM" id="SSF53686">
    <property type="entry name" value="Tryptophan synthase beta subunit-like PLP-dependent enzymes"/>
    <property type="match status" value="1"/>
</dbReference>
<sequence>MPLHHLTRFPRLELIGAPTPLEYLPRLSDYLGREIYIKRDDVTPIAMGGNKLRKLEFLVADALREGADTLITAGAIQSNHVRQTVAVAAKLGLHCVALLENPIGTTAENYLTNGNRLLLDLFNTQIEMCDALTDPDAQLQTLATRIEAQGFRPYVIPVGGSSALGAMGYVESALEIAQQCAEVVGLSSVVVASGSAGTHAGLAVGLEHLMPDVELIGVTVSRSVAEQKPRVISLQQAIAGQLALTATADIHLWDDYFAPGYGVPNDAGMEAVKLLASLEGVLLDPVYTGKAMAGLIDGISQKRFNDDGPILFIHTGGAPALFAYHPHV</sequence>
<keyword id="KW-0456">Lyase</keyword>
<keyword id="KW-0663">Pyridoxal phosphate</keyword>
<accession>C0Q2A0</accession>
<protein>
    <recommendedName>
        <fullName evidence="1">D-cysteine desulfhydrase</fullName>
        <ecNumber evidence="1">4.4.1.15</ecNumber>
    </recommendedName>
</protein>
<gene>
    <name evidence="1" type="primary">dcyD</name>
    <name type="ordered locus">SPC_1761</name>
</gene>
<reference key="1">
    <citation type="journal article" date="2009" name="PLoS ONE">
        <title>Salmonella paratyphi C: genetic divergence from Salmonella choleraesuis and pathogenic convergence with Salmonella typhi.</title>
        <authorList>
            <person name="Liu W.-Q."/>
            <person name="Feng Y."/>
            <person name="Wang Y."/>
            <person name="Zou Q.-H."/>
            <person name="Chen F."/>
            <person name="Guo J.-T."/>
            <person name="Peng Y.-H."/>
            <person name="Jin Y."/>
            <person name="Li Y.-G."/>
            <person name="Hu S.-N."/>
            <person name="Johnston R.N."/>
            <person name="Liu G.-R."/>
            <person name="Liu S.-L."/>
        </authorList>
    </citation>
    <scope>NUCLEOTIDE SEQUENCE [LARGE SCALE GENOMIC DNA]</scope>
    <source>
        <strain>RKS4594</strain>
    </source>
</reference>
<proteinExistence type="inferred from homology"/>
<comment type="function">
    <text evidence="1">Catalyzes the alpha,beta-elimination reaction of D-cysteine and of several D-cysteine derivatives. It could be a defense mechanism against D-cysteine.</text>
</comment>
<comment type="catalytic activity">
    <reaction evidence="1">
        <text>D-cysteine + H2O = hydrogen sulfide + pyruvate + NH4(+) + H(+)</text>
        <dbReference type="Rhea" id="RHEA:11268"/>
        <dbReference type="ChEBI" id="CHEBI:15361"/>
        <dbReference type="ChEBI" id="CHEBI:15377"/>
        <dbReference type="ChEBI" id="CHEBI:15378"/>
        <dbReference type="ChEBI" id="CHEBI:28938"/>
        <dbReference type="ChEBI" id="CHEBI:29919"/>
        <dbReference type="ChEBI" id="CHEBI:35236"/>
        <dbReference type="EC" id="4.4.1.15"/>
    </reaction>
</comment>
<comment type="cofactor">
    <cofactor evidence="1">
        <name>pyridoxal 5'-phosphate</name>
        <dbReference type="ChEBI" id="CHEBI:597326"/>
    </cofactor>
</comment>
<comment type="subunit">
    <text evidence="1">Homodimer.</text>
</comment>
<comment type="similarity">
    <text evidence="1">Belongs to the ACC deaminase/D-cysteine desulfhydrase family.</text>
</comment>